<reference key="1">
    <citation type="journal article" date="1990" name="AIDS Res. Hum. Retroviruses">
        <title>Nucleotide sequence of a Ugandan HIV-1 provirus reveals genetic diversity from other HIV-1 isolates.</title>
        <authorList>
            <person name="Oram J.D."/>
            <person name="Downing R.G."/>
            <person name="Roff M."/>
            <person name="Clegg J.C.S."/>
            <person name="Serwadda D."/>
            <person name="Carswell J.W."/>
        </authorList>
    </citation>
    <scope>NUCLEOTIDE SEQUENCE [GENOMIC DNA]</scope>
</reference>
<reference key="2">
    <citation type="journal article" date="1999" name="Arch. Biochem. Biophys.">
        <title>The ins and outs of HIV Rev.</title>
        <authorList>
            <person name="Hope T.J."/>
        </authorList>
    </citation>
    <scope>REVIEW</scope>
</reference>
<name>REV_HV1U4</name>
<evidence type="ECO:0000255" key="1">
    <source>
        <dbReference type="HAMAP-Rule" id="MF_04077"/>
    </source>
</evidence>
<evidence type="ECO:0000256" key="2">
    <source>
        <dbReference type="SAM" id="MobiDB-lite"/>
    </source>
</evidence>
<dbReference type="EMBL" id="M62320">
    <property type="protein sequence ID" value="AAA75022.1"/>
    <property type="molecule type" value="Genomic_DNA"/>
</dbReference>
<dbReference type="SMR" id="P24739"/>
<dbReference type="Proteomes" id="UP000134285">
    <property type="component" value="Segment"/>
</dbReference>
<dbReference type="GO" id="GO:0030430">
    <property type="term" value="C:host cell cytoplasm"/>
    <property type="evidence" value="ECO:0007669"/>
    <property type="project" value="UniProtKB-SubCell"/>
</dbReference>
<dbReference type="GO" id="GO:0044196">
    <property type="term" value="C:host cell nucleolus"/>
    <property type="evidence" value="ECO:0007669"/>
    <property type="project" value="UniProtKB-SubCell"/>
</dbReference>
<dbReference type="GO" id="GO:0003700">
    <property type="term" value="F:DNA-binding transcription factor activity"/>
    <property type="evidence" value="ECO:0007669"/>
    <property type="project" value="UniProtKB-UniRule"/>
</dbReference>
<dbReference type="GO" id="GO:0003723">
    <property type="term" value="F:RNA binding"/>
    <property type="evidence" value="ECO:0007669"/>
    <property type="project" value="UniProtKB-UniRule"/>
</dbReference>
<dbReference type="GO" id="GO:0051028">
    <property type="term" value="P:mRNA transport"/>
    <property type="evidence" value="ECO:0007669"/>
    <property type="project" value="UniProtKB-UniRule"/>
</dbReference>
<dbReference type="GO" id="GO:0016032">
    <property type="term" value="P:viral process"/>
    <property type="evidence" value="ECO:0007669"/>
    <property type="project" value="UniProtKB-UniRule"/>
</dbReference>
<dbReference type="Gene3D" id="6.10.140.630">
    <property type="match status" value="1"/>
</dbReference>
<dbReference type="HAMAP" id="MF_04077">
    <property type="entry name" value="REV_HIV1"/>
    <property type="match status" value="1"/>
</dbReference>
<dbReference type="InterPro" id="IPR000625">
    <property type="entry name" value="REV_protein"/>
</dbReference>
<dbReference type="Pfam" id="PF00424">
    <property type="entry name" value="REV"/>
    <property type="match status" value="1"/>
</dbReference>
<organism>
    <name type="scientific">Human immunodeficiency virus type 1 group M subtype A (isolate U455)</name>
    <name type="common">HIV-1</name>
    <dbReference type="NCBI Taxonomy" id="11703"/>
    <lineage>
        <taxon>Viruses</taxon>
        <taxon>Riboviria</taxon>
        <taxon>Pararnavirae</taxon>
        <taxon>Artverviricota</taxon>
        <taxon>Revtraviricetes</taxon>
        <taxon>Ortervirales</taxon>
        <taxon>Retroviridae</taxon>
        <taxon>Orthoretrovirinae</taxon>
        <taxon>Lentivirus</taxon>
        <taxon>Human immunodeficiency virus type 1</taxon>
    </lineage>
</organism>
<comment type="function">
    <text evidence="1">Escorts unspliced or incompletely spliced viral pre-mRNAs (late transcripts) out of the nucleus of infected cells. These pre-mRNAs carry a recognition sequence called Rev responsive element (RRE) located in the env gene, that is not present in fully spliced viral mRNAs (early transcripts). This function is essential since most viral proteins are translated from unspliced or partially spliced pre-mRNAs which cannot exit the nucleus by the pathway used by fully processed cellular mRNAs. Rev itself is translated from a fully spliced mRNA that readily exits the nucleus. Rev's nuclear localization signal (NLS) binds directly to KPNB1/Importin beta-1 without previous binding to KPNA1/Importin alpha-1. KPNB1 binds to the GDP bound form of RAN (Ran-GDP) and targets Rev to the nucleus. In the nucleus, the conversion from Ran-GDP to Ran-GTP dissociates Rev from KPNB1 and allows Rev's binding to the RRE in viral pre-mRNAs. Rev multimerization on the RRE via cooperative assembly exposes its nuclear export signal (NES) to the surface. Rev can then form a complex with XPO1/CRM1 and Ran-GTP, leading to nuclear export of the complex. Conversion from Ran-GTP to Ran-GDP mediates dissociation of the Rev/RRE/XPO1/RAN complex, so that Rev can return to the nucleus for a subsequent round of export. Beside KPNB1, also seems to interact with TNPO1/Transportin-1, RANBP5/IPO5 and IPO7/RANBP7 for nuclear import. The nucleoporin-like HRB/RIP is an essential cofactor that probably indirectly interacts with Rev to release HIV RNAs from the perinuclear region to the cytoplasm.</text>
</comment>
<comment type="subunit">
    <text evidence="1">Homomultimer; when bound to the RRE. Multimeric assembly is essential for activity and may involve XPO1. Binds to human KPNB1, XPO1, TNPO1, RANBP5 and IPO7. Interacts with the viral Integrase. Interacts with human KHDRBS1. Interacts with human NAP1; this interaction decreases Rev multimerization and stimulates its activity. Interacts with human DEAD-box helicases DDX3 and DDX24; these interactions may serve for viral RNA export to the cytoplasm and packaging, respectively. Interacts with human PSIP1; this interaction may inhibit HIV-1 DNA integration by promoting dissociation of the Integrase-LEDGF/p75 complex.</text>
</comment>
<comment type="subcellular location">
    <subcellularLocation>
        <location evidence="1">Host nucleus</location>
        <location evidence="1">Host nucleolus</location>
    </subcellularLocation>
    <subcellularLocation>
        <location evidence="1">Host cytoplasm</location>
    </subcellularLocation>
    <text evidence="1">The presence of both nuclear import and nuclear export signals leads to continuous shuttling between the nucleus and cytoplasm.</text>
</comment>
<comment type="domain">
    <text evidence="1">The RNA-binding motif binds to the RRE, a 240 bp stem-and-loop structure present in incompletely spliced viral pre-mRNAs. This region also contains the NLS which mediates nuclear localization via KPNB1 binding and, when the N-terminal sequence is present, nucleolar targeting. These overlapping functions prevent Rev bound to RRE from undesirable return to the nucleus. When Rev binds the RRE, the NLS becomes masked while the NES remains accessible. The leucine-rich NES mediates binding to human XPO1.</text>
</comment>
<comment type="PTM">
    <text evidence="1">Asymmetrically arginine dimethylated at one site by host PRMT6. Methylation impairs the RNA-binding activity and export of viral RNA from the nucleus to the cytoplasm.</text>
</comment>
<comment type="PTM">
    <text evidence="1">Phosphorylated by protein kinase CK2. Presence of, and maybe binding to the N-terminus of the regulatory beta subunit of CK2 is necessary for CK2-mediated Rev's phosphorylation.</text>
</comment>
<comment type="miscellaneous">
    <text evidence="1">HIV-1 lineages are divided in three main groups, M (for Major), O (for Outlier), and N (for New, or Non-M, Non-O). The vast majority of strains found worldwide belong to the group M. Group O seems to be endemic to and largely confined to Cameroon and neighboring countries in West Central Africa, where these viruses represent a small minority of HIV-1 strains. The group N is represented by a limited number of isolates from Cameroonian persons. The group M is further subdivided in 9 clades or subtypes (A to D, F to H, J and K).</text>
</comment>
<comment type="similarity">
    <text evidence="1">Belongs to the HIV-1 REV protein family.</text>
</comment>
<feature type="chain" id="PRO_0000085277" description="Protein Rev">
    <location>
        <begin position="1"/>
        <end position="123"/>
    </location>
</feature>
<feature type="region of interest" description="Homomultimerization" evidence="1">
    <location>
        <begin position="18"/>
        <end position="26"/>
    </location>
</feature>
<feature type="region of interest" description="Disordered" evidence="2">
    <location>
        <begin position="25"/>
        <end position="50"/>
    </location>
</feature>
<feature type="region of interest" description="Disordered" evidence="2">
    <location>
        <begin position="86"/>
        <end position="123"/>
    </location>
</feature>
<feature type="short sequence motif" description="Nuclear localization signal and RNA-binding (RRE)" evidence="1">
    <location>
        <begin position="34"/>
        <end position="50"/>
    </location>
</feature>
<feature type="short sequence motif" description="Nuclear export signal and binding to XPO1" evidence="1">
    <location>
        <begin position="73"/>
        <end position="84"/>
    </location>
</feature>
<feature type="compositionally biased region" description="Basic residues" evidence="2">
    <location>
        <begin position="35"/>
        <end position="49"/>
    </location>
</feature>
<feature type="compositionally biased region" description="Polar residues" evidence="2">
    <location>
        <begin position="88"/>
        <end position="101"/>
    </location>
</feature>
<feature type="modified residue" description="Phosphoserine; by host CK2" evidence="1">
    <location>
        <position position="5"/>
    </location>
</feature>
<feature type="modified residue" description="Phosphoserine; by host" evidence="1">
    <location>
        <position position="92"/>
    </location>
</feature>
<organismHost>
    <name type="scientific">Homo sapiens</name>
    <name type="common">Human</name>
    <dbReference type="NCBI Taxonomy" id="9606"/>
</organismHost>
<proteinExistence type="inferred from homology"/>
<protein>
    <recommendedName>
        <fullName evidence="1">Protein Rev</fullName>
    </recommendedName>
    <alternativeName>
        <fullName evidence="1">ART/TRS</fullName>
    </alternativeName>
    <alternativeName>
        <fullName evidence="1">Anti-repression transactivator</fullName>
    </alternativeName>
    <alternativeName>
        <fullName evidence="1">Regulator of expression of viral proteins</fullName>
    </alternativeName>
</protein>
<keyword id="KW-0014">AIDS</keyword>
<keyword id="KW-1035">Host cytoplasm</keyword>
<keyword id="KW-1048">Host nucleus</keyword>
<keyword id="KW-0945">Host-virus interaction</keyword>
<keyword id="KW-0488">Methylation</keyword>
<keyword id="KW-0509">mRNA transport</keyword>
<keyword id="KW-0597">Phosphoprotein</keyword>
<keyword id="KW-1185">Reference proteome</keyword>
<keyword id="KW-0694">RNA-binding</keyword>
<keyword id="KW-0813">Transport</keyword>
<sequence>MARRSGNPDEDLLKAVRIIKLLYQSSPCPNPRGSRQARKNRRRRWRARQRQIDSLSERILSDCLGRPAEPVPLQLPPIERLRLDCSESCGTSGTQQPQGTETGVGGPQISVESSAVLGSGTKN</sequence>
<accession>P24739</accession>
<gene>
    <name evidence="1" type="primary">rev</name>
</gene>